<name>E2F7_BOVIN</name>
<keyword id="KW-0010">Activator</keyword>
<keyword id="KW-0131">Cell cycle</keyword>
<keyword id="KW-0227">DNA damage</keyword>
<keyword id="KW-0238">DNA-binding</keyword>
<keyword id="KW-0539">Nucleus</keyword>
<keyword id="KW-0597">Phosphoprotein</keyword>
<keyword id="KW-1185">Reference proteome</keyword>
<keyword id="KW-0678">Repressor</keyword>
<keyword id="KW-0804">Transcription</keyword>
<keyword id="KW-0805">Transcription regulation</keyword>
<evidence type="ECO:0000250" key="1"/>
<evidence type="ECO:0000250" key="2">
    <source>
        <dbReference type="UniProtKB" id="Q96AV8"/>
    </source>
</evidence>
<evidence type="ECO:0000255" key="3"/>
<evidence type="ECO:0000256" key="4">
    <source>
        <dbReference type="SAM" id="MobiDB-lite"/>
    </source>
</evidence>
<evidence type="ECO:0000305" key="5"/>
<feature type="chain" id="PRO_0000420704" description="Transcription factor E2F7">
    <location>
        <begin position="1"/>
        <end position="911"/>
    </location>
</feature>
<feature type="DNA-binding region" evidence="3">
    <location>
        <begin position="141"/>
        <end position="210"/>
    </location>
</feature>
<feature type="DNA-binding region" evidence="3">
    <location>
        <begin position="281"/>
        <end position="366"/>
    </location>
</feature>
<feature type="region of interest" description="Disordered" evidence="4">
    <location>
        <begin position="239"/>
        <end position="281"/>
    </location>
</feature>
<feature type="region of interest" description="Disordered" evidence="4">
    <location>
        <begin position="409"/>
        <end position="433"/>
    </location>
</feature>
<feature type="region of interest" description="Disordered" evidence="4">
    <location>
        <begin position="565"/>
        <end position="706"/>
    </location>
</feature>
<feature type="region of interest" description="Disordered" evidence="4">
    <location>
        <begin position="873"/>
        <end position="911"/>
    </location>
</feature>
<feature type="compositionally biased region" description="Basic and acidic residues" evidence="4">
    <location>
        <begin position="243"/>
        <end position="257"/>
    </location>
</feature>
<feature type="compositionally biased region" description="Basic and acidic residues" evidence="4">
    <location>
        <begin position="415"/>
        <end position="424"/>
    </location>
</feature>
<feature type="compositionally biased region" description="Gly residues" evidence="4">
    <location>
        <begin position="566"/>
        <end position="579"/>
    </location>
</feature>
<feature type="compositionally biased region" description="Basic and acidic residues" evidence="4">
    <location>
        <begin position="599"/>
        <end position="621"/>
    </location>
</feature>
<feature type="compositionally biased region" description="Polar residues" evidence="4">
    <location>
        <begin position="669"/>
        <end position="687"/>
    </location>
</feature>
<feature type="compositionally biased region" description="Basic and acidic residues" evidence="4">
    <location>
        <begin position="688"/>
        <end position="698"/>
    </location>
</feature>
<feature type="modified residue" description="Phosphoserine" evidence="2">
    <location>
        <position position="94"/>
    </location>
</feature>
<feature type="modified residue" description="Phosphoserine" evidence="2">
    <location>
        <position position="409"/>
    </location>
</feature>
<feature type="modified residue" description="Phosphoserine" evidence="2">
    <location>
        <position position="840"/>
    </location>
</feature>
<accession>E1BE02</accession>
<comment type="function">
    <text evidence="1">Atypical E2F transcription factor that participates in various processes such as angiogenesis, polyploidization of specialized cells and DNA damage response. Mainly acts as a transcription repressor that binds DNA independently of DP proteins and specifically recognizes the E2 recognition site 5'-TTTC[CG]CGC-3'. Directly represses transcription of classical E2F transcription factors such as E2F1. Acts as a regulator of S-phase by recognizing and binding the E2-related site 5'-TTCCCGCC-3' and mediating repression of G1/S-regulated genes. Plays a key role in polyploidization of cells in placenta and liver by regulating the endocycle, probably by repressing genes promoting cytokinesis and antagonizing action of classical E2F proteins (E2F1, E2F2 and/or E2F3). Required for placental development by promoting polyploidization of trophoblast giant cells. Also involved in DNA damage response: up-regulated by p53/TP53 following genotoxic stress and acts as a downstream effector of p53/TP53-dependent repression by mediating repression of indirect p53/TP53 target genes involved in DNA replication. Acts as a promoter of sprouting angiogenesis, possibly by acting as a transcription activator: associates with HIF1A, recognizes and binds the VEGFA promoter, which is different from canonical E2 recognition site, and activates expression of the VEGFA gene. Acts as a negative regulator of keratinocyte differentiation (By similarity).</text>
</comment>
<comment type="subunit">
    <text evidence="1 2">Homodimer and heterodimer: mainly forms homodimers and, to a lesser extent, heterodimers with E2F8. Dimerization is important for DNA-binding. Interacts with HIF1A (By similarity). Interacts with MN1 (By similarity).</text>
</comment>
<comment type="subcellular location">
    <subcellularLocation>
        <location evidence="1">Nucleus</location>
    </subcellularLocation>
</comment>
<comment type="domain">
    <text evidence="1">In contrast to classical members of the E2F transcription factor, atypical members contain 2 DNA-binding domains and regulate transcription in a DP-independent manner. Both DNA-binding domains are required for DNA-binding and are proposed to form an intramolecular structure that is similar to the winged helix structure of the E2F-DP heterodimer (By similarity).</text>
</comment>
<comment type="similarity">
    <text evidence="5">Belongs to the E2F/DP family.</text>
</comment>
<sequence length="911" mass="99229">MEVNCLTLKDLISRPPRLDFAIEDGENAQKENIFVDLSRMAPKTPIKNEPIDLSKQKIFTPERNPITPVKLVDRQQVEPWTPTANLKILISAASPDIRDREKKKELFRPIENKDDVFTDSLQLDAVDDSAVDEFEKQRPSRKQKSLGLLCQKFLARYPSYPLSTEKTTISLDEVAVSLGVERRRIYDIVNVLESLHLVSRVAKNQYSWHGRHSLPKTLRNLQRLGEKQKYEEQMAHLQQKELNPIDHKSGERRRDGCPDSQDPQLLDFPEPDCPSSSANSRKDKSLKIMSQKFVMLFLVSKTKIVTLDVAAKILIEESQDIPDHSKFKTKVRRLYDIANVLTSLMLIKKVHVTEDRGRKPAFKWIGPVDFSSTDDDLVDVSTPVLPELKKEIYGHVQFCAKQKLARHSSFNSEQASERTQRKVNSEPSSPYRQKQGLGVYSLEIGSLAAVSRQKMEDNSETVAFASQNMMPLPSSLDPAAPLPSPSVDSEYRVSPLCHQALSAAQTDLKALPAQNGLNGQGGVSLASMALDVEHQPQPLAAAQPLLYVPPAPLFMLCGGLQEGLSPGSGSGSGSVGGGSEVTAAEQPPMPSGQKRLSKERRLQEEEEEPATKRQCRDHEDGPLSLVMPKKPSDSADIASPKTSENRASAPHEDTHMNGQLSAAKAVSGKATTNGFVSSEWGNPCSNTEIEKPSEENESTKGPSPLQYLYVQPPAGLNGLSVLLPSSQSPHAVGLPVGPLPSLSIQYMVLPSPALSGFPVLCSPTMPGPVSSAPSPLPNVGPVNFGLPGLGSTAHLLIGPAAMVNPKSSTLPSTDPQLQGPCSLHLSPVMSRSHGSVQPGSPAYGSLPAATVKLQQSPVPVTPKSIRCTHQETFFKTPGSLGDPVLRRKERNQSRSSSSAQRRLEISSGGTD</sequence>
<organism>
    <name type="scientific">Bos taurus</name>
    <name type="common">Bovine</name>
    <dbReference type="NCBI Taxonomy" id="9913"/>
    <lineage>
        <taxon>Eukaryota</taxon>
        <taxon>Metazoa</taxon>
        <taxon>Chordata</taxon>
        <taxon>Craniata</taxon>
        <taxon>Vertebrata</taxon>
        <taxon>Euteleostomi</taxon>
        <taxon>Mammalia</taxon>
        <taxon>Eutheria</taxon>
        <taxon>Laurasiatheria</taxon>
        <taxon>Artiodactyla</taxon>
        <taxon>Ruminantia</taxon>
        <taxon>Pecora</taxon>
        <taxon>Bovidae</taxon>
        <taxon>Bovinae</taxon>
        <taxon>Bos</taxon>
    </lineage>
</organism>
<gene>
    <name type="primary">E2F7</name>
</gene>
<reference key="1">
    <citation type="journal article" date="2009" name="Genome Biol.">
        <title>A whole-genome assembly of the domestic cow, Bos taurus.</title>
        <authorList>
            <person name="Zimin A.V."/>
            <person name="Delcher A.L."/>
            <person name="Florea L."/>
            <person name="Kelley D.R."/>
            <person name="Schatz M.C."/>
            <person name="Puiu D."/>
            <person name="Hanrahan F."/>
            <person name="Pertea G."/>
            <person name="Van Tassell C.P."/>
            <person name="Sonstegard T.S."/>
            <person name="Marcais G."/>
            <person name="Roberts M."/>
            <person name="Subramanian P."/>
            <person name="Yorke J.A."/>
            <person name="Salzberg S.L."/>
        </authorList>
    </citation>
    <scope>NUCLEOTIDE SEQUENCE [LARGE SCALE GENOMIC DNA]</scope>
    <source>
        <strain>Hereford</strain>
    </source>
</reference>
<dbReference type="EMBL" id="DAAA02012389">
    <property type="status" value="NOT_ANNOTATED_CDS"/>
    <property type="molecule type" value="Genomic_DNA"/>
</dbReference>
<dbReference type="EMBL" id="DAAA02012390">
    <property type="status" value="NOT_ANNOTATED_CDS"/>
    <property type="molecule type" value="Genomic_DNA"/>
</dbReference>
<dbReference type="SMR" id="E1BE02"/>
<dbReference type="FunCoup" id="E1BE02">
    <property type="interactions" value="417"/>
</dbReference>
<dbReference type="STRING" id="9913.ENSBTAP00000022518"/>
<dbReference type="PaxDb" id="9913-ENSBTAP00000022518"/>
<dbReference type="eggNOG" id="KOG2578">
    <property type="taxonomic scope" value="Eukaryota"/>
</dbReference>
<dbReference type="HOGENOM" id="CLU_014845_1_0_1"/>
<dbReference type="InParanoid" id="E1BE02"/>
<dbReference type="OrthoDB" id="5318at2759"/>
<dbReference type="TreeFam" id="TF105567"/>
<dbReference type="Proteomes" id="UP000009136">
    <property type="component" value="Unplaced"/>
</dbReference>
<dbReference type="GO" id="GO:0090575">
    <property type="term" value="C:RNA polymerase II transcription regulator complex"/>
    <property type="evidence" value="ECO:0000318"/>
    <property type="project" value="GO_Central"/>
</dbReference>
<dbReference type="GO" id="GO:0003700">
    <property type="term" value="F:DNA-binding transcription factor activity"/>
    <property type="evidence" value="ECO:0000250"/>
    <property type="project" value="UniProtKB"/>
</dbReference>
<dbReference type="GO" id="GO:0000981">
    <property type="term" value="F:DNA-binding transcription factor activity, RNA polymerase II-specific"/>
    <property type="evidence" value="ECO:0000318"/>
    <property type="project" value="GO_Central"/>
</dbReference>
<dbReference type="GO" id="GO:0001217">
    <property type="term" value="F:DNA-binding transcription repressor activity"/>
    <property type="evidence" value="ECO:0000250"/>
    <property type="project" value="UniProtKB"/>
</dbReference>
<dbReference type="GO" id="GO:0000978">
    <property type="term" value="F:RNA polymerase II cis-regulatory region sequence-specific DNA binding"/>
    <property type="evidence" value="ECO:0000250"/>
    <property type="project" value="UniProtKB"/>
</dbReference>
<dbReference type="GO" id="GO:0060718">
    <property type="term" value="P:chorionic trophoblast cell differentiation"/>
    <property type="evidence" value="ECO:0000250"/>
    <property type="project" value="UniProtKB"/>
</dbReference>
<dbReference type="GO" id="GO:0030330">
    <property type="term" value="P:DNA damage response, signal transduction by p53 class mediator"/>
    <property type="evidence" value="ECO:0000250"/>
    <property type="project" value="UniProtKB"/>
</dbReference>
<dbReference type="GO" id="GO:0070365">
    <property type="term" value="P:hepatocyte differentiation"/>
    <property type="evidence" value="ECO:0000250"/>
    <property type="project" value="UniProtKB"/>
</dbReference>
<dbReference type="GO" id="GO:0032466">
    <property type="term" value="P:negative regulation of cytokinesis"/>
    <property type="evidence" value="ECO:0000250"/>
    <property type="project" value="UniProtKB"/>
</dbReference>
<dbReference type="GO" id="GO:2000134">
    <property type="term" value="P:negative regulation of G1/S transition of mitotic cell cycle"/>
    <property type="evidence" value="ECO:0000250"/>
    <property type="project" value="UniProtKB"/>
</dbReference>
<dbReference type="GO" id="GO:0000122">
    <property type="term" value="P:negative regulation of transcription by RNA polymerase II"/>
    <property type="evidence" value="ECO:0000250"/>
    <property type="project" value="UniProtKB"/>
</dbReference>
<dbReference type="GO" id="GO:0001890">
    <property type="term" value="P:placenta development"/>
    <property type="evidence" value="ECO:0000250"/>
    <property type="project" value="UniProtKB"/>
</dbReference>
<dbReference type="GO" id="GO:0032877">
    <property type="term" value="P:positive regulation of DNA endoreduplication"/>
    <property type="evidence" value="ECO:0000250"/>
    <property type="project" value="UniProtKB"/>
</dbReference>
<dbReference type="GO" id="GO:0006357">
    <property type="term" value="P:regulation of transcription by RNA polymerase II"/>
    <property type="evidence" value="ECO:0000318"/>
    <property type="project" value="GO_Central"/>
</dbReference>
<dbReference type="GO" id="GO:0002040">
    <property type="term" value="P:sprouting angiogenesis"/>
    <property type="evidence" value="ECO:0000250"/>
    <property type="project" value="UniProtKB"/>
</dbReference>
<dbReference type="GO" id="GO:0060707">
    <property type="term" value="P:trophoblast giant cell differentiation"/>
    <property type="evidence" value="ECO:0000250"/>
    <property type="project" value="UniProtKB"/>
</dbReference>
<dbReference type="FunFam" id="1.10.10.10:FF:000073">
    <property type="entry name" value="E2F transcription factor 8"/>
    <property type="match status" value="1"/>
</dbReference>
<dbReference type="FunFam" id="1.10.10.10:FF:000100">
    <property type="entry name" value="E2F transcription factor 8"/>
    <property type="match status" value="1"/>
</dbReference>
<dbReference type="Gene3D" id="1.10.10.10">
    <property type="entry name" value="Winged helix-like DNA-binding domain superfamily/Winged helix DNA-binding domain"/>
    <property type="match status" value="2"/>
</dbReference>
<dbReference type="InterPro" id="IPR015633">
    <property type="entry name" value="E2F"/>
</dbReference>
<dbReference type="InterPro" id="IPR003316">
    <property type="entry name" value="E2F_WHTH_DNA-bd_dom"/>
</dbReference>
<dbReference type="InterPro" id="IPR036388">
    <property type="entry name" value="WH-like_DNA-bd_sf"/>
</dbReference>
<dbReference type="InterPro" id="IPR036390">
    <property type="entry name" value="WH_DNA-bd_sf"/>
</dbReference>
<dbReference type="PANTHER" id="PTHR12081">
    <property type="entry name" value="TRANSCRIPTION FACTOR E2F"/>
    <property type="match status" value="1"/>
</dbReference>
<dbReference type="PANTHER" id="PTHR12081:SF25">
    <property type="entry name" value="TRANSCRIPTION FACTOR E2F7"/>
    <property type="match status" value="1"/>
</dbReference>
<dbReference type="Pfam" id="PF02319">
    <property type="entry name" value="E2F_TDP"/>
    <property type="match status" value="2"/>
</dbReference>
<dbReference type="SMART" id="SM01372">
    <property type="entry name" value="E2F_TDP"/>
    <property type="match status" value="2"/>
</dbReference>
<dbReference type="SUPFAM" id="SSF46785">
    <property type="entry name" value="Winged helix' DNA-binding domain"/>
    <property type="match status" value="2"/>
</dbReference>
<protein>
    <recommendedName>
        <fullName>Transcription factor E2F7</fullName>
        <shortName>E2F-7</shortName>
    </recommendedName>
</protein>
<proteinExistence type="inferred from homology"/>